<protein>
    <recommendedName>
        <fullName>Defensin-like protein 68</fullName>
    </recommendedName>
</protein>
<gene>
    <name type="ordered locus">At1g24062</name>
    <name type="ORF">T23E23.21</name>
</gene>
<reference key="1">
    <citation type="journal article" date="2000" name="Nature">
        <title>Sequence and analysis of chromosome 1 of the plant Arabidopsis thaliana.</title>
        <authorList>
            <person name="Theologis A."/>
            <person name="Ecker J.R."/>
            <person name="Palm C.J."/>
            <person name="Federspiel N.A."/>
            <person name="Kaul S."/>
            <person name="White O."/>
            <person name="Alonso J."/>
            <person name="Altafi H."/>
            <person name="Araujo R."/>
            <person name="Bowman C.L."/>
            <person name="Brooks S.Y."/>
            <person name="Buehler E."/>
            <person name="Chan A."/>
            <person name="Chao Q."/>
            <person name="Chen H."/>
            <person name="Cheuk R.F."/>
            <person name="Chin C.W."/>
            <person name="Chung M.K."/>
            <person name="Conn L."/>
            <person name="Conway A.B."/>
            <person name="Conway A.R."/>
            <person name="Creasy T.H."/>
            <person name="Dewar K."/>
            <person name="Dunn P."/>
            <person name="Etgu P."/>
            <person name="Feldblyum T.V."/>
            <person name="Feng J.-D."/>
            <person name="Fong B."/>
            <person name="Fujii C.Y."/>
            <person name="Gill J.E."/>
            <person name="Goldsmith A.D."/>
            <person name="Haas B."/>
            <person name="Hansen N.F."/>
            <person name="Hughes B."/>
            <person name="Huizar L."/>
            <person name="Hunter J.L."/>
            <person name="Jenkins J."/>
            <person name="Johnson-Hopson C."/>
            <person name="Khan S."/>
            <person name="Khaykin E."/>
            <person name="Kim C.J."/>
            <person name="Koo H.L."/>
            <person name="Kremenetskaia I."/>
            <person name="Kurtz D.B."/>
            <person name="Kwan A."/>
            <person name="Lam B."/>
            <person name="Langin-Hooper S."/>
            <person name="Lee A."/>
            <person name="Lee J.M."/>
            <person name="Lenz C.A."/>
            <person name="Li J.H."/>
            <person name="Li Y.-P."/>
            <person name="Lin X."/>
            <person name="Liu S.X."/>
            <person name="Liu Z.A."/>
            <person name="Luros J.S."/>
            <person name="Maiti R."/>
            <person name="Marziali A."/>
            <person name="Militscher J."/>
            <person name="Miranda M."/>
            <person name="Nguyen M."/>
            <person name="Nierman W.C."/>
            <person name="Osborne B.I."/>
            <person name="Pai G."/>
            <person name="Peterson J."/>
            <person name="Pham P.K."/>
            <person name="Rizzo M."/>
            <person name="Rooney T."/>
            <person name="Rowley D."/>
            <person name="Sakano H."/>
            <person name="Salzberg S.L."/>
            <person name="Schwartz J.R."/>
            <person name="Shinn P."/>
            <person name="Southwick A.M."/>
            <person name="Sun H."/>
            <person name="Tallon L.J."/>
            <person name="Tambunga G."/>
            <person name="Toriumi M.J."/>
            <person name="Town C.D."/>
            <person name="Utterback T."/>
            <person name="Van Aken S."/>
            <person name="Vaysberg M."/>
            <person name="Vysotskaia V.S."/>
            <person name="Walker M."/>
            <person name="Wu D."/>
            <person name="Yu G."/>
            <person name="Fraser C.M."/>
            <person name="Venter J.C."/>
            <person name="Davis R.W."/>
        </authorList>
    </citation>
    <scope>NUCLEOTIDE SEQUENCE [LARGE SCALE GENOMIC DNA]</scope>
    <source>
        <strain>cv. Columbia</strain>
    </source>
</reference>
<reference key="2">
    <citation type="journal article" date="2017" name="Plant J.">
        <title>Araport11: a complete reannotation of the Arabidopsis thaliana reference genome.</title>
        <authorList>
            <person name="Cheng C.Y."/>
            <person name="Krishnakumar V."/>
            <person name="Chan A.P."/>
            <person name="Thibaud-Nissen F."/>
            <person name="Schobel S."/>
            <person name="Town C.D."/>
        </authorList>
    </citation>
    <scope>GENOME REANNOTATION</scope>
    <source>
        <strain>cv. Columbia</strain>
    </source>
</reference>
<reference key="3">
    <citation type="journal article" date="2006" name="Plant Biotechnol. J.">
        <title>Simultaneous high-throughput recombinational cloning of open reading frames in closed and open configurations.</title>
        <authorList>
            <person name="Underwood B.A."/>
            <person name="Vanderhaeghen R."/>
            <person name="Whitford R."/>
            <person name="Town C.D."/>
            <person name="Hilson P."/>
        </authorList>
    </citation>
    <scope>NUCLEOTIDE SEQUENCE [LARGE SCALE MRNA]</scope>
    <source>
        <strain>cv. Columbia</strain>
    </source>
</reference>
<reference key="4">
    <citation type="journal article" date="2007" name="BMC Genomics">
        <title>Experimental validation of novel genes predicted in the un-annotated regions of the Arabidopsis genome.</title>
        <authorList>
            <person name="Moskal W.A. Jr."/>
            <person name="Wu H.C."/>
            <person name="Underwood B.A."/>
            <person name="Wang W."/>
            <person name="Town C.D."/>
            <person name="Xiao Y.-L."/>
        </authorList>
    </citation>
    <scope>NUCLEOTIDE SEQUENCE [LARGE SCALE MRNA]</scope>
    <source>
        <strain>cv. Columbia</strain>
    </source>
</reference>
<reference key="5">
    <citation type="journal article" date="2005" name="Plant Physiol.">
        <title>Genome organization of more than 300 defensin-like genes in Arabidopsis.</title>
        <authorList>
            <person name="Silverstein K.A.T."/>
            <person name="Graham M.A."/>
            <person name="Paape T.D."/>
            <person name="VandenBosch K.A."/>
        </authorList>
    </citation>
    <scope>GENE FAMILY</scope>
</reference>
<comment type="subcellular location">
    <subcellularLocation>
        <location evidence="1">Secreted</location>
    </subcellularLocation>
</comment>
<comment type="similarity">
    <text evidence="3">Belongs to the DEFL family.</text>
</comment>
<comment type="sequence caution" evidence="3">
    <conflict type="erroneous gene model prediction">
        <sequence resource="EMBL-CDS" id="AAF87150"/>
    </conflict>
    <text>The predicted gene has been split into 2 genes: At1g24060 and At1g24062.</text>
</comment>
<comment type="sequence caution" evidence="3">
    <conflict type="erroneous termination">
        <sequence resource="EMBL-CDS" id="ABK27947"/>
    </conflict>
    <text>Extended C-terminus.</text>
</comment>
<proteinExistence type="inferred from homology"/>
<evidence type="ECO:0000250" key="1"/>
<evidence type="ECO:0000255" key="2"/>
<evidence type="ECO:0000305" key="3"/>
<sequence>MGSSKLLVALTLVVMITISYDLFSEIGISAATLVIPTCFENCNATFQDPECNKWCALLAYKDGSCLYPPSEVDDLPPIKRPYIPRCCCNPITLSPPSP</sequence>
<keyword id="KW-0929">Antimicrobial</keyword>
<keyword id="KW-1015">Disulfide bond</keyword>
<keyword id="KW-0295">Fungicide</keyword>
<keyword id="KW-0611">Plant defense</keyword>
<keyword id="KW-1185">Reference proteome</keyword>
<keyword id="KW-0964">Secreted</keyword>
<keyword id="KW-0732">Signal</keyword>
<dbReference type="EMBL" id="AC002423">
    <property type="protein sequence ID" value="AAF87150.1"/>
    <property type="status" value="ALT_SEQ"/>
    <property type="molecule type" value="Genomic_DNA"/>
</dbReference>
<dbReference type="EMBL" id="CP002684">
    <property type="protein sequence ID" value="AEE30474.1"/>
    <property type="molecule type" value="Genomic_DNA"/>
</dbReference>
<dbReference type="EMBL" id="DQ912185">
    <property type="protein sequence ID" value="ABI34007.1"/>
    <property type="molecule type" value="mRNA"/>
</dbReference>
<dbReference type="EMBL" id="DQ912237">
    <property type="protein sequence ID" value="ABK27947.1"/>
    <property type="status" value="ALT_SEQ"/>
    <property type="molecule type" value="mRNA"/>
</dbReference>
<dbReference type="EMBL" id="EF182856">
    <property type="status" value="NOT_ANNOTATED_CDS"/>
    <property type="molecule type" value="mRNA"/>
</dbReference>
<dbReference type="RefSeq" id="NP_001031087.1">
    <property type="nucleotide sequence ID" value="NM_001036010.2"/>
</dbReference>
<dbReference type="PaxDb" id="3702-AT1G24062.1"/>
<dbReference type="EnsemblPlants" id="AT1G24062.1">
    <property type="protein sequence ID" value="AT1G24062.1"/>
    <property type="gene ID" value="AT1G24062"/>
</dbReference>
<dbReference type="GeneID" id="3766789"/>
<dbReference type="Gramene" id="AT1G24062.1">
    <property type="protein sequence ID" value="AT1G24062.1"/>
    <property type="gene ID" value="AT1G24062"/>
</dbReference>
<dbReference type="KEGG" id="ath:AT1G24062"/>
<dbReference type="Araport" id="AT1G24062"/>
<dbReference type="TAIR" id="AT1G24062"/>
<dbReference type="HOGENOM" id="CLU_175051_0_0_1"/>
<dbReference type="InParanoid" id="Q2V4L5"/>
<dbReference type="PhylomeDB" id="Q2V4L5"/>
<dbReference type="PRO" id="PR:Q2V4L5"/>
<dbReference type="Proteomes" id="UP000006548">
    <property type="component" value="Chromosome 1"/>
</dbReference>
<dbReference type="ExpressionAtlas" id="Q2V4L5">
    <property type="expression patterns" value="baseline and differential"/>
</dbReference>
<dbReference type="GO" id="GO:0005576">
    <property type="term" value="C:extracellular region"/>
    <property type="evidence" value="ECO:0007669"/>
    <property type="project" value="UniProtKB-SubCell"/>
</dbReference>
<dbReference type="GO" id="GO:0050832">
    <property type="term" value="P:defense response to fungus"/>
    <property type="evidence" value="ECO:0007669"/>
    <property type="project" value="UniProtKB-KW"/>
</dbReference>
<dbReference type="GO" id="GO:0031640">
    <property type="term" value="P:killing of cells of another organism"/>
    <property type="evidence" value="ECO:0007669"/>
    <property type="project" value="UniProtKB-KW"/>
</dbReference>
<dbReference type="InterPro" id="IPR056373">
    <property type="entry name" value="Defensin-like_dom"/>
</dbReference>
<dbReference type="Pfam" id="PF24552">
    <property type="entry name" value="Defensin"/>
    <property type="match status" value="1"/>
</dbReference>
<organism>
    <name type="scientific">Arabidopsis thaliana</name>
    <name type="common">Mouse-ear cress</name>
    <dbReference type="NCBI Taxonomy" id="3702"/>
    <lineage>
        <taxon>Eukaryota</taxon>
        <taxon>Viridiplantae</taxon>
        <taxon>Streptophyta</taxon>
        <taxon>Embryophyta</taxon>
        <taxon>Tracheophyta</taxon>
        <taxon>Spermatophyta</taxon>
        <taxon>Magnoliopsida</taxon>
        <taxon>eudicotyledons</taxon>
        <taxon>Gunneridae</taxon>
        <taxon>Pentapetalae</taxon>
        <taxon>rosids</taxon>
        <taxon>malvids</taxon>
        <taxon>Brassicales</taxon>
        <taxon>Brassicaceae</taxon>
        <taxon>Camelineae</taxon>
        <taxon>Arabidopsis</taxon>
    </lineage>
</organism>
<accession>Q2V4L5</accession>
<accession>A0MJT8</accession>
<accession>Q9LR89</accession>
<feature type="signal peptide" evidence="2">
    <location>
        <begin position="1"/>
        <end position="19"/>
    </location>
</feature>
<feature type="chain" id="PRO_0000379646" description="Defensin-like protein 68">
    <location>
        <begin position="20"/>
        <end position="98"/>
    </location>
</feature>
<feature type="disulfide bond" evidence="1">
    <location>
        <begin position="38"/>
        <end position="88"/>
    </location>
</feature>
<feature type="disulfide bond" evidence="1">
    <location>
        <begin position="42"/>
        <end position="65"/>
    </location>
</feature>
<feature type="disulfide bond" evidence="1">
    <location>
        <begin position="51"/>
        <end position="86"/>
    </location>
</feature>
<feature type="disulfide bond" evidence="1">
    <location>
        <begin position="55"/>
        <end position="87"/>
    </location>
</feature>
<name>DEF68_ARATH</name>